<gene>
    <name type="primary">tma16</name>
    <name type="ORF">zgc:110664</name>
</gene>
<protein>
    <recommendedName>
        <fullName>Translation machinery-associated protein 16</fullName>
    </recommendedName>
</protein>
<feature type="chain" id="PRO_0000321561" description="Translation machinery-associated protein 16">
    <location>
        <begin position="1"/>
        <end position="194"/>
    </location>
</feature>
<feature type="region of interest" description="Disordered" evidence="2">
    <location>
        <begin position="160"/>
        <end position="194"/>
    </location>
</feature>
<feature type="compositionally biased region" description="Basic and acidic residues" evidence="2">
    <location>
        <begin position="185"/>
        <end position="194"/>
    </location>
</feature>
<feature type="sequence conflict" description="In Ref. 1; AAH95357." evidence="3" ref="1">
    <original>R</original>
    <variation>K</variation>
    <location>
        <position position="79"/>
    </location>
</feature>
<organism>
    <name type="scientific">Danio rerio</name>
    <name type="common">Zebrafish</name>
    <name type="synonym">Brachydanio rerio</name>
    <dbReference type="NCBI Taxonomy" id="7955"/>
    <lineage>
        <taxon>Eukaryota</taxon>
        <taxon>Metazoa</taxon>
        <taxon>Chordata</taxon>
        <taxon>Craniata</taxon>
        <taxon>Vertebrata</taxon>
        <taxon>Euteleostomi</taxon>
        <taxon>Actinopterygii</taxon>
        <taxon>Neopterygii</taxon>
        <taxon>Teleostei</taxon>
        <taxon>Ostariophysi</taxon>
        <taxon>Cypriniformes</taxon>
        <taxon>Danionidae</taxon>
        <taxon>Danioninae</taxon>
        <taxon>Danio</taxon>
    </lineage>
</organism>
<name>TMA16_DANRE</name>
<comment type="function">
    <text evidence="1">Involved in the biogenesis of the 60S ribosomal subunit in the nucleus.</text>
</comment>
<comment type="subunit">
    <text evidence="1">Associates with pre-60S ribosomal particles.</text>
</comment>
<comment type="subcellular location">
    <subcellularLocation>
        <location evidence="1">Nucleus</location>
    </subcellularLocation>
</comment>
<comment type="similarity">
    <text evidence="3">Belongs to the TMA16 family.</text>
</comment>
<sequence length="194" mass="22547">MPKGRKPKGPVEKKVIHPYSRKAAYLARDAIKQERKEKLKGEKAQRLNLVGEKLLWFQNQLNPDKPEYTRQDACEITERYLQRFDGELEQIELANSIKGRQGRQHSSREAIIKQTIERERAQYEGNGFEIPDIINAKHLKIFREWNGDLKKLPCIKMRKLSAKGSDSKPSTVSQDTHMEEENEEDKSLDSDSDL</sequence>
<evidence type="ECO:0000250" key="1">
    <source>
        <dbReference type="UniProtKB" id="Q96EY4"/>
    </source>
</evidence>
<evidence type="ECO:0000256" key="2">
    <source>
        <dbReference type="SAM" id="MobiDB-lite"/>
    </source>
</evidence>
<evidence type="ECO:0000305" key="3"/>
<reference key="1">
    <citation type="submission" date="2007-08" db="EMBL/GenBank/DDBJ databases">
        <authorList>
            <consortium name="NIH - Zebrafish Gene Collection (ZGC) project"/>
        </authorList>
    </citation>
    <scope>NUCLEOTIDE SEQUENCE [LARGE SCALE MRNA]</scope>
    <source>
        <tissue>Embryo</tissue>
        <tissue>Olfactory epithelium</tissue>
    </source>
</reference>
<accession>A7MCB7</accession>
<accession>Q503E8</accession>
<dbReference type="EMBL" id="BC095357">
    <property type="protein sequence ID" value="AAH95357.1"/>
    <property type="molecule type" value="mRNA"/>
</dbReference>
<dbReference type="EMBL" id="BC152117">
    <property type="protein sequence ID" value="AAI52118.1"/>
    <property type="molecule type" value="mRNA"/>
</dbReference>
<dbReference type="SMR" id="A7MCB7"/>
<dbReference type="FunCoup" id="A7MCB7">
    <property type="interactions" value="1132"/>
</dbReference>
<dbReference type="STRING" id="7955.ENSDARP00000017350"/>
<dbReference type="PaxDb" id="7955-ENSDARP00000017350"/>
<dbReference type="PeptideAtlas" id="A7MCB7"/>
<dbReference type="AGR" id="ZFIN:ZDB-GENE-050522-20"/>
<dbReference type="ZFIN" id="ZDB-GENE-050522-20">
    <property type="gene designation" value="tma16"/>
</dbReference>
<dbReference type="eggNOG" id="ENOG502RXYZ">
    <property type="taxonomic scope" value="Eukaryota"/>
</dbReference>
<dbReference type="InParanoid" id="A7MCB7"/>
<dbReference type="PRO" id="PR:A7MCB7"/>
<dbReference type="Proteomes" id="UP000000437">
    <property type="component" value="Unplaced"/>
</dbReference>
<dbReference type="GO" id="GO:0005634">
    <property type="term" value="C:nucleus"/>
    <property type="evidence" value="ECO:0000318"/>
    <property type="project" value="GO_Central"/>
</dbReference>
<dbReference type="GO" id="GO:1990275">
    <property type="term" value="F:preribosome binding"/>
    <property type="evidence" value="ECO:0000250"/>
    <property type="project" value="UniProtKB"/>
</dbReference>
<dbReference type="GO" id="GO:0042273">
    <property type="term" value="P:ribosomal large subunit biogenesis"/>
    <property type="evidence" value="ECO:0000250"/>
    <property type="project" value="UniProtKB"/>
</dbReference>
<dbReference type="FunFam" id="1.20.1440.170:FF:000001">
    <property type="entry name" value="Translation machinery-associated 16 homolog"/>
    <property type="match status" value="1"/>
</dbReference>
<dbReference type="Gene3D" id="1.20.1440.170">
    <property type="entry name" value="Translation machinery-associated protein 16-like"/>
    <property type="match status" value="1"/>
</dbReference>
<dbReference type="InterPro" id="IPR021346">
    <property type="entry name" value="Tma16"/>
</dbReference>
<dbReference type="InterPro" id="IPR038356">
    <property type="entry name" value="Tma16_sf"/>
</dbReference>
<dbReference type="PANTHER" id="PTHR13349">
    <property type="entry name" value="TRANSLATION MACHINERY-ASSOCIATED PROTEIN 16"/>
    <property type="match status" value="1"/>
</dbReference>
<dbReference type="PANTHER" id="PTHR13349:SF2">
    <property type="entry name" value="TRANSLATION MACHINERY-ASSOCIATED PROTEIN 16"/>
    <property type="match status" value="1"/>
</dbReference>
<dbReference type="Pfam" id="PF11176">
    <property type="entry name" value="Tma16"/>
    <property type="match status" value="1"/>
</dbReference>
<keyword id="KW-0539">Nucleus</keyword>
<keyword id="KW-1185">Reference proteome</keyword>
<keyword id="KW-0690">Ribosome biogenesis</keyword>
<proteinExistence type="evidence at transcript level"/>